<reference key="1">
    <citation type="journal article" date="2005" name="Nature">
        <title>Genome sequencing and analysis of Aspergillus oryzae.</title>
        <authorList>
            <person name="Machida M."/>
            <person name="Asai K."/>
            <person name="Sano M."/>
            <person name="Tanaka T."/>
            <person name="Kumagai T."/>
            <person name="Terai G."/>
            <person name="Kusumoto K."/>
            <person name="Arima T."/>
            <person name="Akita O."/>
            <person name="Kashiwagi Y."/>
            <person name="Abe K."/>
            <person name="Gomi K."/>
            <person name="Horiuchi H."/>
            <person name="Kitamoto K."/>
            <person name="Kobayashi T."/>
            <person name="Takeuchi M."/>
            <person name="Denning D.W."/>
            <person name="Galagan J.E."/>
            <person name="Nierman W.C."/>
            <person name="Yu J."/>
            <person name="Archer D.B."/>
            <person name="Bennett J.W."/>
            <person name="Bhatnagar D."/>
            <person name="Cleveland T.E."/>
            <person name="Fedorova N.D."/>
            <person name="Gotoh O."/>
            <person name="Horikawa H."/>
            <person name="Hosoyama A."/>
            <person name="Ichinomiya M."/>
            <person name="Igarashi R."/>
            <person name="Iwashita K."/>
            <person name="Juvvadi P.R."/>
            <person name="Kato M."/>
            <person name="Kato Y."/>
            <person name="Kin T."/>
            <person name="Kokubun A."/>
            <person name="Maeda H."/>
            <person name="Maeyama N."/>
            <person name="Maruyama J."/>
            <person name="Nagasaki H."/>
            <person name="Nakajima T."/>
            <person name="Oda K."/>
            <person name="Okada K."/>
            <person name="Paulsen I."/>
            <person name="Sakamoto K."/>
            <person name="Sawano T."/>
            <person name="Takahashi M."/>
            <person name="Takase K."/>
            <person name="Terabayashi Y."/>
            <person name="Wortman J.R."/>
            <person name="Yamada O."/>
            <person name="Yamagata Y."/>
            <person name="Anazawa H."/>
            <person name="Hata Y."/>
            <person name="Koide Y."/>
            <person name="Komori T."/>
            <person name="Koyama Y."/>
            <person name="Minetoki T."/>
            <person name="Suharnan S."/>
            <person name="Tanaka A."/>
            <person name="Isono K."/>
            <person name="Kuhara S."/>
            <person name="Ogasawara N."/>
            <person name="Kikuchi H."/>
        </authorList>
    </citation>
    <scope>NUCLEOTIDE SEQUENCE [LARGE SCALE GENOMIC DNA]</scope>
    <source>
        <strain>ATCC 42149 / RIB 40</strain>
    </source>
</reference>
<feature type="chain" id="PRO_0000238533" description="mRNA 3'-end-processing protein yth1">
    <location>
        <begin position="1"/>
        <end position="255"/>
    </location>
</feature>
<feature type="zinc finger region" description="C3H1-type 1" evidence="2">
    <location>
        <begin position="41"/>
        <end position="68"/>
    </location>
</feature>
<feature type="zinc finger region" description="C3H1-type 2" evidence="2">
    <location>
        <begin position="91"/>
        <end position="113"/>
    </location>
</feature>
<feature type="zinc finger region" description="C3H1-type 3" evidence="2">
    <location>
        <begin position="114"/>
        <end position="142"/>
    </location>
</feature>
<feature type="zinc finger region" description="C3H1-type 4" evidence="2">
    <location>
        <begin position="143"/>
        <end position="170"/>
    </location>
</feature>
<feature type="zinc finger region" description="C3H1-type 5" evidence="2">
    <location>
        <begin position="172"/>
        <end position="194"/>
    </location>
</feature>
<feature type="region of interest" description="Disordered" evidence="3">
    <location>
        <begin position="221"/>
        <end position="255"/>
    </location>
</feature>
<feature type="compositionally biased region" description="Basic and acidic residues" evidence="3">
    <location>
        <begin position="221"/>
        <end position="239"/>
    </location>
</feature>
<feature type="compositionally biased region" description="Basic residues" evidence="3">
    <location>
        <begin position="246"/>
        <end position="255"/>
    </location>
</feature>
<comment type="function">
    <text evidence="1">Component of the cleavage factor I (CF I) involved in pre-mRNA 3'-end processing.</text>
</comment>
<comment type="subcellular location">
    <subcellularLocation>
        <location evidence="1">Nucleus</location>
    </subcellularLocation>
</comment>
<comment type="similarity">
    <text evidence="4">Belongs to the CPSF4/YTH1 family.</text>
</comment>
<proteinExistence type="inferred from homology"/>
<dbReference type="EMBL" id="BA000049">
    <property type="protein sequence ID" value="BAE55829.1"/>
    <property type="molecule type" value="Genomic_DNA"/>
</dbReference>
<dbReference type="RefSeq" id="XP_001817831.1">
    <property type="nucleotide sequence ID" value="XM_001817779.2"/>
</dbReference>
<dbReference type="SMR" id="Q2URI6"/>
<dbReference type="STRING" id="510516.Q2URI6"/>
<dbReference type="EnsemblFungi" id="BAE55829">
    <property type="protein sequence ID" value="BAE55829"/>
    <property type="gene ID" value="AO090005000813"/>
</dbReference>
<dbReference type="GeneID" id="5989776"/>
<dbReference type="KEGG" id="aor:AO090005000813"/>
<dbReference type="VEuPathDB" id="FungiDB:AO090005000813"/>
<dbReference type="HOGENOM" id="CLU_024513_1_1_1"/>
<dbReference type="OMA" id="SLVCKHY"/>
<dbReference type="OrthoDB" id="120156at5052"/>
<dbReference type="Proteomes" id="UP000006564">
    <property type="component" value="Chromosome 1"/>
</dbReference>
<dbReference type="GO" id="GO:0005829">
    <property type="term" value="C:cytosol"/>
    <property type="evidence" value="ECO:0007669"/>
    <property type="project" value="EnsemblFungi"/>
</dbReference>
<dbReference type="GO" id="GO:0005847">
    <property type="term" value="C:mRNA cleavage and polyadenylation specificity factor complex"/>
    <property type="evidence" value="ECO:0007669"/>
    <property type="project" value="EnsemblFungi"/>
</dbReference>
<dbReference type="GO" id="GO:0003723">
    <property type="term" value="F:RNA binding"/>
    <property type="evidence" value="ECO:0007669"/>
    <property type="project" value="UniProtKB-KW"/>
</dbReference>
<dbReference type="GO" id="GO:0008270">
    <property type="term" value="F:zinc ion binding"/>
    <property type="evidence" value="ECO:0007669"/>
    <property type="project" value="UniProtKB-KW"/>
</dbReference>
<dbReference type="GO" id="GO:0006397">
    <property type="term" value="P:mRNA processing"/>
    <property type="evidence" value="ECO:0007669"/>
    <property type="project" value="UniProtKB-KW"/>
</dbReference>
<dbReference type="FunFam" id="4.10.1000.10:FF:000012">
    <property type="entry name" value="cleavage and polyadenylation specificity factor subunit 4"/>
    <property type="match status" value="1"/>
</dbReference>
<dbReference type="Gene3D" id="4.10.1000.10">
    <property type="entry name" value="Zinc finger, CCCH-type"/>
    <property type="match status" value="2"/>
</dbReference>
<dbReference type="InterPro" id="IPR045348">
    <property type="entry name" value="CPSF4/Yth1"/>
</dbReference>
<dbReference type="InterPro" id="IPR000571">
    <property type="entry name" value="Znf_CCCH"/>
</dbReference>
<dbReference type="InterPro" id="IPR036855">
    <property type="entry name" value="Znf_CCCH_sf"/>
</dbReference>
<dbReference type="PANTHER" id="PTHR23102:SF24">
    <property type="entry name" value="CLEAVAGE AND POLYADENYLATION SPECIFICITY FACTOR SUBUNIT 4"/>
    <property type="match status" value="1"/>
</dbReference>
<dbReference type="PANTHER" id="PTHR23102">
    <property type="entry name" value="CLEAVAGE AND POLYADENYLATION SPECIFICITY FACTOR SUBUNIT 4-RELATED"/>
    <property type="match status" value="1"/>
</dbReference>
<dbReference type="Pfam" id="PF00642">
    <property type="entry name" value="zf-CCCH"/>
    <property type="match status" value="1"/>
</dbReference>
<dbReference type="Pfam" id="PF14608">
    <property type="entry name" value="zf-CCCH_2"/>
    <property type="match status" value="4"/>
</dbReference>
<dbReference type="SMART" id="SM00356">
    <property type="entry name" value="ZnF_C3H1"/>
    <property type="match status" value="5"/>
</dbReference>
<dbReference type="SUPFAM" id="SSF90229">
    <property type="entry name" value="CCCH zinc finger"/>
    <property type="match status" value="2"/>
</dbReference>
<dbReference type="PROSITE" id="PS50103">
    <property type="entry name" value="ZF_C3H1"/>
    <property type="match status" value="5"/>
</dbReference>
<protein>
    <recommendedName>
        <fullName>mRNA 3'-end-processing protein yth1</fullName>
    </recommendedName>
</protein>
<accession>Q2URI6</accession>
<organism>
    <name type="scientific">Aspergillus oryzae (strain ATCC 42149 / RIB 40)</name>
    <name type="common">Yellow koji mold</name>
    <dbReference type="NCBI Taxonomy" id="510516"/>
    <lineage>
        <taxon>Eukaryota</taxon>
        <taxon>Fungi</taxon>
        <taxon>Dikarya</taxon>
        <taxon>Ascomycota</taxon>
        <taxon>Pezizomycotina</taxon>
        <taxon>Eurotiomycetes</taxon>
        <taxon>Eurotiomycetidae</taxon>
        <taxon>Eurotiales</taxon>
        <taxon>Aspergillaceae</taxon>
        <taxon>Aspergillus</taxon>
        <taxon>Aspergillus subgen. Circumdati</taxon>
    </lineage>
</organism>
<keyword id="KW-0479">Metal-binding</keyword>
<keyword id="KW-0507">mRNA processing</keyword>
<keyword id="KW-0539">Nucleus</keyword>
<keyword id="KW-1185">Reference proteome</keyword>
<keyword id="KW-0677">Repeat</keyword>
<keyword id="KW-0694">RNA-binding</keyword>
<keyword id="KW-0862">Zinc</keyword>
<keyword id="KW-0863">Zinc-finger</keyword>
<gene>
    <name type="primary">yth1</name>
    <name type="ORF">AO090005000813</name>
</gene>
<evidence type="ECO:0000250" key="1"/>
<evidence type="ECO:0000255" key="2">
    <source>
        <dbReference type="PROSITE-ProRule" id="PRU00723"/>
    </source>
</evidence>
<evidence type="ECO:0000256" key="3">
    <source>
        <dbReference type="SAM" id="MobiDB-lite"/>
    </source>
</evidence>
<evidence type="ECO:0000305" key="4"/>
<name>YTH1_ASPOR</name>
<sequence>MSAEVSHAASQILASGSERDPSYNDFSFIPFLRNSFGFGLACDVPVCKAYSEGHCPLGPACPDRHPTPSRVTTSTTTASGLAPSTTHGSLVCKHFLKGLCKKGLKCEYLHEYNLRRMPECQSFSRSGYCPNGDDCLYQHVREQARLPPCEHYDRGFCPLGPLCAKRHVRRRLCQYYLAGFCPEGKGCADAHARWIENLPKPSIRVEKTEEELERERILIREEQEREKEREREWRSERGRGGGFMRGRFRGRGRGL</sequence>